<evidence type="ECO:0000255" key="1">
    <source>
        <dbReference type="HAMAP-Rule" id="MF_00344"/>
    </source>
</evidence>
<name>GUAA_NITEC</name>
<sequence>MHSAILILDFGSQYARLIARRIRETSVYCELHPFDVSPQFIREFSPVGIILSGGPASIFTNDAPRVPQIVFELGVPVLGICYGMQAMAAQLGGEVENAQTREFGYAELLTEPCRLFQDIKDRINSDGKPALDVWMSHGDRVNKLPPGFTAIAFNAATPFAAMADETRRFYGVQFHPEVTHTLQGKAILDRFVHDICDAGYDWNMPDYVEEAIGRIRARVGGDKVILGLSGGVDSSVAAALIHRAIGDQLVCVFVDNGLLRLNEAKQTMETFSRNLAVNVIYVDASRQFLEQLKGITDPEQKRRTIGREFVEIFQQEAAKIENVKWLAQGTIYPDVIESAGSHTKKSGLIKSHHNVGGLPETLRLKLLEPLRELFKDEVRELGLALGLPRDLVFRHPFPGPGLGVRILGEVKYEYTELLRQADAIFIEELRNAGWYEKTSQAFAVFLPIKSVGVMGDNRSYEYVIALRAVQTEDFMTAQWAELPYTLLARISNRIINEIRGINRVVYDISGKPPATIEWE</sequence>
<dbReference type="EC" id="6.3.5.2" evidence="1"/>
<dbReference type="EMBL" id="CP000450">
    <property type="protein sequence ID" value="ABI60468.1"/>
    <property type="molecule type" value="Genomic_DNA"/>
</dbReference>
<dbReference type="RefSeq" id="WP_011635259.1">
    <property type="nucleotide sequence ID" value="NC_008344.1"/>
</dbReference>
<dbReference type="SMR" id="Q0ADW4"/>
<dbReference type="STRING" id="335283.Neut_2251"/>
<dbReference type="MEROPS" id="C26.957"/>
<dbReference type="KEGG" id="net:Neut_2251"/>
<dbReference type="eggNOG" id="COG0519">
    <property type="taxonomic scope" value="Bacteria"/>
</dbReference>
<dbReference type="HOGENOM" id="CLU_014340_0_5_4"/>
<dbReference type="OrthoDB" id="9802219at2"/>
<dbReference type="UniPathway" id="UPA00189">
    <property type="reaction ID" value="UER00296"/>
</dbReference>
<dbReference type="Proteomes" id="UP000001966">
    <property type="component" value="Chromosome"/>
</dbReference>
<dbReference type="GO" id="GO:0005829">
    <property type="term" value="C:cytosol"/>
    <property type="evidence" value="ECO:0007669"/>
    <property type="project" value="TreeGrafter"/>
</dbReference>
<dbReference type="GO" id="GO:0005524">
    <property type="term" value="F:ATP binding"/>
    <property type="evidence" value="ECO:0007669"/>
    <property type="project" value="UniProtKB-UniRule"/>
</dbReference>
<dbReference type="GO" id="GO:0003921">
    <property type="term" value="F:GMP synthase activity"/>
    <property type="evidence" value="ECO:0007669"/>
    <property type="project" value="InterPro"/>
</dbReference>
<dbReference type="CDD" id="cd01742">
    <property type="entry name" value="GATase1_GMP_Synthase"/>
    <property type="match status" value="1"/>
</dbReference>
<dbReference type="CDD" id="cd01997">
    <property type="entry name" value="GMP_synthase_C"/>
    <property type="match status" value="1"/>
</dbReference>
<dbReference type="FunFam" id="3.30.300.10:FF:000002">
    <property type="entry name" value="GMP synthase [glutamine-hydrolyzing]"/>
    <property type="match status" value="1"/>
</dbReference>
<dbReference type="FunFam" id="3.40.50.620:FF:000001">
    <property type="entry name" value="GMP synthase [glutamine-hydrolyzing]"/>
    <property type="match status" value="1"/>
</dbReference>
<dbReference type="FunFam" id="3.40.50.880:FF:000001">
    <property type="entry name" value="GMP synthase [glutamine-hydrolyzing]"/>
    <property type="match status" value="1"/>
</dbReference>
<dbReference type="Gene3D" id="3.30.300.10">
    <property type="match status" value="1"/>
</dbReference>
<dbReference type="Gene3D" id="3.40.50.880">
    <property type="match status" value="1"/>
</dbReference>
<dbReference type="Gene3D" id="3.40.50.620">
    <property type="entry name" value="HUPs"/>
    <property type="match status" value="1"/>
</dbReference>
<dbReference type="HAMAP" id="MF_00344">
    <property type="entry name" value="GMP_synthase"/>
    <property type="match status" value="1"/>
</dbReference>
<dbReference type="InterPro" id="IPR029062">
    <property type="entry name" value="Class_I_gatase-like"/>
</dbReference>
<dbReference type="InterPro" id="IPR017926">
    <property type="entry name" value="GATASE"/>
</dbReference>
<dbReference type="InterPro" id="IPR001674">
    <property type="entry name" value="GMP_synth_C"/>
</dbReference>
<dbReference type="InterPro" id="IPR004739">
    <property type="entry name" value="GMP_synth_GATase"/>
</dbReference>
<dbReference type="InterPro" id="IPR022955">
    <property type="entry name" value="GMP_synthase"/>
</dbReference>
<dbReference type="InterPro" id="IPR025777">
    <property type="entry name" value="GMPS_ATP_PPase_dom"/>
</dbReference>
<dbReference type="InterPro" id="IPR022310">
    <property type="entry name" value="NAD/GMP_synthase"/>
</dbReference>
<dbReference type="InterPro" id="IPR014729">
    <property type="entry name" value="Rossmann-like_a/b/a_fold"/>
</dbReference>
<dbReference type="NCBIfam" id="TIGR00884">
    <property type="entry name" value="guaA_Cterm"/>
    <property type="match status" value="1"/>
</dbReference>
<dbReference type="NCBIfam" id="TIGR00888">
    <property type="entry name" value="guaA_Nterm"/>
    <property type="match status" value="1"/>
</dbReference>
<dbReference type="NCBIfam" id="NF000848">
    <property type="entry name" value="PRK00074.1"/>
    <property type="match status" value="1"/>
</dbReference>
<dbReference type="PANTHER" id="PTHR11922:SF2">
    <property type="entry name" value="GMP SYNTHASE [GLUTAMINE-HYDROLYZING]"/>
    <property type="match status" value="1"/>
</dbReference>
<dbReference type="PANTHER" id="PTHR11922">
    <property type="entry name" value="GMP SYNTHASE-RELATED"/>
    <property type="match status" value="1"/>
</dbReference>
<dbReference type="Pfam" id="PF00117">
    <property type="entry name" value="GATase"/>
    <property type="match status" value="1"/>
</dbReference>
<dbReference type="Pfam" id="PF00958">
    <property type="entry name" value="GMP_synt_C"/>
    <property type="match status" value="1"/>
</dbReference>
<dbReference type="Pfam" id="PF02540">
    <property type="entry name" value="NAD_synthase"/>
    <property type="match status" value="1"/>
</dbReference>
<dbReference type="PRINTS" id="PR00097">
    <property type="entry name" value="ANTSNTHASEII"/>
</dbReference>
<dbReference type="PRINTS" id="PR00096">
    <property type="entry name" value="GATASE"/>
</dbReference>
<dbReference type="SUPFAM" id="SSF52402">
    <property type="entry name" value="Adenine nucleotide alpha hydrolases-like"/>
    <property type="match status" value="1"/>
</dbReference>
<dbReference type="SUPFAM" id="SSF52317">
    <property type="entry name" value="Class I glutamine amidotransferase-like"/>
    <property type="match status" value="1"/>
</dbReference>
<dbReference type="SUPFAM" id="SSF54810">
    <property type="entry name" value="GMP synthetase C-terminal dimerisation domain"/>
    <property type="match status" value="1"/>
</dbReference>
<dbReference type="PROSITE" id="PS51273">
    <property type="entry name" value="GATASE_TYPE_1"/>
    <property type="match status" value="1"/>
</dbReference>
<dbReference type="PROSITE" id="PS51553">
    <property type="entry name" value="GMPS_ATP_PPASE"/>
    <property type="match status" value="1"/>
</dbReference>
<gene>
    <name evidence="1" type="primary">guaA</name>
    <name type="ordered locus">Neut_2251</name>
</gene>
<keyword id="KW-0067">ATP-binding</keyword>
<keyword id="KW-0315">Glutamine amidotransferase</keyword>
<keyword id="KW-0332">GMP biosynthesis</keyword>
<keyword id="KW-0436">Ligase</keyword>
<keyword id="KW-0547">Nucleotide-binding</keyword>
<keyword id="KW-0658">Purine biosynthesis</keyword>
<proteinExistence type="inferred from homology"/>
<feature type="chain" id="PRO_1000120344" description="GMP synthase [glutamine-hydrolyzing]">
    <location>
        <begin position="1"/>
        <end position="519"/>
    </location>
</feature>
<feature type="domain" description="Glutamine amidotransferase type-1" evidence="1">
    <location>
        <begin position="4"/>
        <end position="201"/>
    </location>
</feature>
<feature type="domain" description="GMPS ATP-PPase" evidence="1">
    <location>
        <begin position="202"/>
        <end position="394"/>
    </location>
</feature>
<feature type="active site" description="Nucleophile" evidence="1">
    <location>
        <position position="81"/>
    </location>
</feature>
<feature type="active site" evidence="1">
    <location>
        <position position="175"/>
    </location>
</feature>
<feature type="active site" evidence="1">
    <location>
        <position position="177"/>
    </location>
</feature>
<feature type="binding site" evidence="1">
    <location>
        <begin position="229"/>
        <end position="235"/>
    </location>
    <ligand>
        <name>ATP</name>
        <dbReference type="ChEBI" id="CHEBI:30616"/>
    </ligand>
</feature>
<protein>
    <recommendedName>
        <fullName evidence="1">GMP synthase [glutamine-hydrolyzing]</fullName>
        <ecNumber evidence="1">6.3.5.2</ecNumber>
    </recommendedName>
    <alternativeName>
        <fullName evidence="1">GMP synthetase</fullName>
    </alternativeName>
    <alternativeName>
        <fullName evidence="1">Glutamine amidotransferase</fullName>
    </alternativeName>
</protein>
<comment type="function">
    <text evidence="1">Catalyzes the synthesis of GMP from XMP.</text>
</comment>
<comment type="catalytic activity">
    <reaction evidence="1">
        <text>XMP + L-glutamine + ATP + H2O = GMP + L-glutamate + AMP + diphosphate + 2 H(+)</text>
        <dbReference type="Rhea" id="RHEA:11680"/>
        <dbReference type="ChEBI" id="CHEBI:15377"/>
        <dbReference type="ChEBI" id="CHEBI:15378"/>
        <dbReference type="ChEBI" id="CHEBI:29985"/>
        <dbReference type="ChEBI" id="CHEBI:30616"/>
        <dbReference type="ChEBI" id="CHEBI:33019"/>
        <dbReference type="ChEBI" id="CHEBI:57464"/>
        <dbReference type="ChEBI" id="CHEBI:58115"/>
        <dbReference type="ChEBI" id="CHEBI:58359"/>
        <dbReference type="ChEBI" id="CHEBI:456215"/>
        <dbReference type="EC" id="6.3.5.2"/>
    </reaction>
</comment>
<comment type="pathway">
    <text evidence="1">Purine metabolism; GMP biosynthesis; GMP from XMP (L-Gln route): step 1/1.</text>
</comment>
<comment type="subunit">
    <text evidence="1">Homodimer.</text>
</comment>
<organism>
    <name type="scientific">Nitrosomonas eutropha (strain DSM 101675 / C91 / Nm57)</name>
    <dbReference type="NCBI Taxonomy" id="335283"/>
    <lineage>
        <taxon>Bacteria</taxon>
        <taxon>Pseudomonadati</taxon>
        <taxon>Pseudomonadota</taxon>
        <taxon>Betaproteobacteria</taxon>
        <taxon>Nitrosomonadales</taxon>
        <taxon>Nitrosomonadaceae</taxon>
        <taxon>Nitrosomonas</taxon>
    </lineage>
</organism>
<reference key="1">
    <citation type="journal article" date="2007" name="Environ. Microbiol.">
        <title>Whole-genome analysis of the ammonia-oxidizing bacterium, Nitrosomonas eutropha C91: implications for niche adaptation.</title>
        <authorList>
            <person name="Stein L.Y."/>
            <person name="Arp D.J."/>
            <person name="Berube P.M."/>
            <person name="Chain P.S."/>
            <person name="Hauser L."/>
            <person name="Jetten M.S."/>
            <person name="Klotz M.G."/>
            <person name="Larimer F.W."/>
            <person name="Norton J.M."/>
            <person name="Op den Camp H.J.M."/>
            <person name="Shin M."/>
            <person name="Wei X."/>
        </authorList>
    </citation>
    <scope>NUCLEOTIDE SEQUENCE [LARGE SCALE GENOMIC DNA]</scope>
    <source>
        <strain>DSM 101675 / C91 / Nm57</strain>
    </source>
</reference>
<accession>Q0ADW4</accession>